<name>MSRA_PSEPK</name>
<accession>Q88QZ8</accession>
<protein>
    <recommendedName>
        <fullName evidence="1">Peptide methionine sulfoxide reductase MsrA</fullName>
        <shortName evidence="1">Protein-methionine-S-oxide reductase</shortName>
        <ecNumber evidence="1">1.8.4.11</ecNumber>
    </recommendedName>
    <alternativeName>
        <fullName evidence="1">Peptide-methionine (S)-S-oxide reductase</fullName>
        <shortName evidence="1">Peptide Met(O) reductase</shortName>
    </alternativeName>
</protein>
<dbReference type="EC" id="1.8.4.11" evidence="1"/>
<dbReference type="EMBL" id="AE015451">
    <property type="protein sequence ID" value="AAN65967.1"/>
    <property type="molecule type" value="Genomic_DNA"/>
</dbReference>
<dbReference type="RefSeq" id="NP_742503.1">
    <property type="nucleotide sequence ID" value="NC_002947.4"/>
</dbReference>
<dbReference type="RefSeq" id="WP_010951691.1">
    <property type="nucleotide sequence ID" value="NZ_CP169744.1"/>
</dbReference>
<dbReference type="SMR" id="Q88QZ8"/>
<dbReference type="STRING" id="160488.PP_0336"/>
<dbReference type="PaxDb" id="160488-PP_0336"/>
<dbReference type="GeneID" id="83677611"/>
<dbReference type="KEGG" id="ppu:PP_0336"/>
<dbReference type="PATRIC" id="fig|160488.4.peg.361"/>
<dbReference type="eggNOG" id="COG0225">
    <property type="taxonomic scope" value="Bacteria"/>
</dbReference>
<dbReference type="HOGENOM" id="CLU_031040_10_3_6"/>
<dbReference type="OrthoDB" id="4174719at2"/>
<dbReference type="PhylomeDB" id="Q88QZ8"/>
<dbReference type="BioCyc" id="PPUT160488:G1G01-369-MONOMER"/>
<dbReference type="Proteomes" id="UP000000556">
    <property type="component" value="Chromosome"/>
</dbReference>
<dbReference type="GO" id="GO:0005737">
    <property type="term" value="C:cytoplasm"/>
    <property type="evidence" value="ECO:0007669"/>
    <property type="project" value="TreeGrafter"/>
</dbReference>
<dbReference type="GO" id="GO:0036456">
    <property type="term" value="F:L-methionine-(S)-S-oxide reductase activity"/>
    <property type="evidence" value="ECO:0007669"/>
    <property type="project" value="TreeGrafter"/>
</dbReference>
<dbReference type="GO" id="GO:0008113">
    <property type="term" value="F:peptide-methionine (S)-S-oxide reductase activity"/>
    <property type="evidence" value="ECO:0007669"/>
    <property type="project" value="UniProtKB-UniRule"/>
</dbReference>
<dbReference type="GO" id="GO:0034599">
    <property type="term" value="P:cellular response to oxidative stress"/>
    <property type="evidence" value="ECO:0007669"/>
    <property type="project" value="TreeGrafter"/>
</dbReference>
<dbReference type="GO" id="GO:0036211">
    <property type="term" value="P:protein modification process"/>
    <property type="evidence" value="ECO:0007669"/>
    <property type="project" value="UniProtKB-UniRule"/>
</dbReference>
<dbReference type="FunFam" id="3.30.1060.10:FF:000001">
    <property type="entry name" value="Peptide methionine sulfoxide reductase MsrA"/>
    <property type="match status" value="1"/>
</dbReference>
<dbReference type="Gene3D" id="3.30.1060.10">
    <property type="entry name" value="Peptide methionine sulphoxide reductase MsrA"/>
    <property type="match status" value="1"/>
</dbReference>
<dbReference type="HAMAP" id="MF_01401">
    <property type="entry name" value="MsrA"/>
    <property type="match status" value="1"/>
</dbReference>
<dbReference type="InterPro" id="IPR002569">
    <property type="entry name" value="Met_Sox_Rdtase_MsrA_dom"/>
</dbReference>
<dbReference type="InterPro" id="IPR036509">
    <property type="entry name" value="Met_Sox_Rdtase_MsrA_sf"/>
</dbReference>
<dbReference type="InterPro" id="IPR050162">
    <property type="entry name" value="MsrA_MetSO_reductase"/>
</dbReference>
<dbReference type="NCBIfam" id="TIGR00401">
    <property type="entry name" value="msrA"/>
    <property type="match status" value="1"/>
</dbReference>
<dbReference type="PANTHER" id="PTHR42799">
    <property type="entry name" value="MITOCHONDRIAL PEPTIDE METHIONINE SULFOXIDE REDUCTASE"/>
    <property type="match status" value="1"/>
</dbReference>
<dbReference type="PANTHER" id="PTHR42799:SF2">
    <property type="entry name" value="MITOCHONDRIAL PEPTIDE METHIONINE SULFOXIDE REDUCTASE"/>
    <property type="match status" value="1"/>
</dbReference>
<dbReference type="Pfam" id="PF01625">
    <property type="entry name" value="PMSR"/>
    <property type="match status" value="1"/>
</dbReference>
<dbReference type="SUPFAM" id="SSF55068">
    <property type="entry name" value="Peptide methionine sulfoxide reductase"/>
    <property type="match status" value="1"/>
</dbReference>
<gene>
    <name evidence="1" type="primary">msrA</name>
    <name type="ordered locus">PP_0336</name>
</gene>
<reference key="1">
    <citation type="journal article" date="2002" name="Environ. Microbiol.">
        <title>Complete genome sequence and comparative analysis of the metabolically versatile Pseudomonas putida KT2440.</title>
        <authorList>
            <person name="Nelson K.E."/>
            <person name="Weinel C."/>
            <person name="Paulsen I.T."/>
            <person name="Dodson R.J."/>
            <person name="Hilbert H."/>
            <person name="Martins dos Santos V.A.P."/>
            <person name="Fouts D.E."/>
            <person name="Gill S.R."/>
            <person name="Pop M."/>
            <person name="Holmes M."/>
            <person name="Brinkac L.M."/>
            <person name="Beanan M.J."/>
            <person name="DeBoy R.T."/>
            <person name="Daugherty S.C."/>
            <person name="Kolonay J.F."/>
            <person name="Madupu R."/>
            <person name="Nelson W.C."/>
            <person name="White O."/>
            <person name="Peterson J.D."/>
            <person name="Khouri H.M."/>
            <person name="Hance I."/>
            <person name="Chris Lee P."/>
            <person name="Holtzapple E.K."/>
            <person name="Scanlan D."/>
            <person name="Tran K."/>
            <person name="Moazzez A."/>
            <person name="Utterback T.R."/>
            <person name="Rizzo M."/>
            <person name="Lee K."/>
            <person name="Kosack D."/>
            <person name="Moestl D."/>
            <person name="Wedler H."/>
            <person name="Lauber J."/>
            <person name="Stjepandic D."/>
            <person name="Hoheisel J."/>
            <person name="Straetz M."/>
            <person name="Heim S."/>
            <person name="Kiewitz C."/>
            <person name="Eisen J.A."/>
            <person name="Timmis K.N."/>
            <person name="Duesterhoeft A."/>
            <person name="Tuemmler B."/>
            <person name="Fraser C.M."/>
        </authorList>
    </citation>
    <scope>NUCLEOTIDE SEQUENCE [LARGE SCALE GENOMIC DNA]</scope>
    <source>
        <strain>ATCC 47054 / DSM 6125 / CFBP 8728 / NCIMB 11950 / KT2440</strain>
    </source>
</reference>
<proteinExistence type="inferred from homology"/>
<sequence>MVLRSEILVNKNVMPTAEQALPGRDTPMSLPEFHYVFKDTPLLGPFFEGAIDFAIFGLGCFWGAERRFWQREGVVSTVVGYAGGFTPHPTYEEVCSGLTGHTEVVLVVFDKDKVSYRELLAMFWELHNPTQGMRQGNDIGTQYRSAIYCTSPEQLEQAKASRDAFQAELSKAGFGEITTEIDQAPTVYFAEAYHQQYLAKNPDGYCGIGGTGVCLPPSLQGN</sequence>
<evidence type="ECO:0000255" key="1">
    <source>
        <dbReference type="HAMAP-Rule" id="MF_01401"/>
    </source>
</evidence>
<organism>
    <name type="scientific">Pseudomonas putida (strain ATCC 47054 / DSM 6125 / CFBP 8728 / NCIMB 11950 / KT2440)</name>
    <dbReference type="NCBI Taxonomy" id="160488"/>
    <lineage>
        <taxon>Bacteria</taxon>
        <taxon>Pseudomonadati</taxon>
        <taxon>Pseudomonadota</taxon>
        <taxon>Gammaproteobacteria</taxon>
        <taxon>Pseudomonadales</taxon>
        <taxon>Pseudomonadaceae</taxon>
        <taxon>Pseudomonas</taxon>
    </lineage>
</organism>
<keyword id="KW-0560">Oxidoreductase</keyword>
<keyword id="KW-1185">Reference proteome</keyword>
<feature type="chain" id="PRO_0000138568" description="Peptide methionine sulfoxide reductase MsrA">
    <location>
        <begin position="1"/>
        <end position="222"/>
    </location>
</feature>
<feature type="active site" evidence="1">
    <location>
        <position position="60"/>
    </location>
</feature>
<comment type="function">
    <text evidence="1">Has an important function as a repair enzyme for proteins that have been inactivated by oxidation. Catalyzes the reversible oxidation-reduction of methionine sulfoxide in proteins to methionine.</text>
</comment>
<comment type="catalytic activity">
    <reaction evidence="1">
        <text>L-methionyl-[protein] + [thioredoxin]-disulfide + H2O = L-methionyl-(S)-S-oxide-[protein] + [thioredoxin]-dithiol</text>
        <dbReference type="Rhea" id="RHEA:14217"/>
        <dbReference type="Rhea" id="RHEA-COMP:10698"/>
        <dbReference type="Rhea" id="RHEA-COMP:10700"/>
        <dbReference type="Rhea" id="RHEA-COMP:12313"/>
        <dbReference type="Rhea" id="RHEA-COMP:12315"/>
        <dbReference type="ChEBI" id="CHEBI:15377"/>
        <dbReference type="ChEBI" id="CHEBI:16044"/>
        <dbReference type="ChEBI" id="CHEBI:29950"/>
        <dbReference type="ChEBI" id="CHEBI:44120"/>
        <dbReference type="ChEBI" id="CHEBI:50058"/>
        <dbReference type="EC" id="1.8.4.11"/>
    </reaction>
</comment>
<comment type="catalytic activity">
    <reaction evidence="1">
        <text>[thioredoxin]-disulfide + L-methionine + H2O = L-methionine (S)-S-oxide + [thioredoxin]-dithiol</text>
        <dbReference type="Rhea" id="RHEA:19993"/>
        <dbReference type="Rhea" id="RHEA-COMP:10698"/>
        <dbReference type="Rhea" id="RHEA-COMP:10700"/>
        <dbReference type="ChEBI" id="CHEBI:15377"/>
        <dbReference type="ChEBI" id="CHEBI:29950"/>
        <dbReference type="ChEBI" id="CHEBI:50058"/>
        <dbReference type="ChEBI" id="CHEBI:57844"/>
        <dbReference type="ChEBI" id="CHEBI:58772"/>
        <dbReference type="EC" id="1.8.4.11"/>
    </reaction>
</comment>
<comment type="similarity">
    <text evidence="1">Belongs to the MsrA Met sulfoxide reductase family.</text>
</comment>